<keyword id="KW-0963">Cytoplasm</keyword>
<keyword id="KW-0690">Ribosome biogenesis</keyword>
<dbReference type="EMBL" id="CP000948">
    <property type="protein sequence ID" value="ACB04246.1"/>
    <property type="molecule type" value="Genomic_DNA"/>
</dbReference>
<dbReference type="RefSeq" id="WP_001040205.1">
    <property type="nucleotide sequence ID" value="NC_010473.1"/>
</dbReference>
<dbReference type="SMR" id="B1XGX9"/>
<dbReference type="GeneID" id="93778816"/>
<dbReference type="KEGG" id="ecd:ECDH10B_3341"/>
<dbReference type="HOGENOM" id="CLU_089475_5_0_6"/>
<dbReference type="GO" id="GO:0005829">
    <property type="term" value="C:cytosol"/>
    <property type="evidence" value="ECO:0007669"/>
    <property type="project" value="TreeGrafter"/>
</dbReference>
<dbReference type="GO" id="GO:0043024">
    <property type="term" value="F:ribosomal small subunit binding"/>
    <property type="evidence" value="ECO:0007669"/>
    <property type="project" value="TreeGrafter"/>
</dbReference>
<dbReference type="GO" id="GO:0030490">
    <property type="term" value="P:maturation of SSU-rRNA"/>
    <property type="evidence" value="ECO:0007669"/>
    <property type="project" value="UniProtKB-UniRule"/>
</dbReference>
<dbReference type="FunFam" id="3.30.300.20:FF:000007">
    <property type="entry name" value="Ribosome-binding factor A"/>
    <property type="match status" value="1"/>
</dbReference>
<dbReference type="Gene3D" id="3.30.300.20">
    <property type="match status" value="1"/>
</dbReference>
<dbReference type="HAMAP" id="MF_00003">
    <property type="entry name" value="RbfA"/>
    <property type="match status" value="1"/>
</dbReference>
<dbReference type="InterPro" id="IPR015946">
    <property type="entry name" value="KH_dom-like_a/b"/>
</dbReference>
<dbReference type="InterPro" id="IPR000238">
    <property type="entry name" value="RbfA"/>
</dbReference>
<dbReference type="InterPro" id="IPR023799">
    <property type="entry name" value="RbfA_dom_sf"/>
</dbReference>
<dbReference type="InterPro" id="IPR020053">
    <property type="entry name" value="Ribosome-bd_factorA_CS"/>
</dbReference>
<dbReference type="NCBIfam" id="TIGR00082">
    <property type="entry name" value="rbfA"/>
    <property type="match status" value="1"/>
</dbReference>
<dbReference type="PANTHER" id="PTHR33515">
    <property type="entry name" value="RIBOSOME-BINDING FACTOR A, CHLOROPLASTIC-RELATED"/>
    <property type="match status" value="1"/>
</dbReference>
<dbReference type="PANTHER" id="PTHR33515:SF1">
    <property type="entry name" value="RIBOSOME-BINDING FACTOR A, CHLOROPLASTIC-RELATED"/>
    <property type="match status" value="1"/>
</dbReference>
<dbReference type="Pfam" id="PF02033">
    <property type="entry name" value="RBFA"/>
    <property type="match status" value="1"/>
</dbReference>
<dbReference type="SUPFAM" id="SSF89919">
    <property type="entry name" value="Ribosome-binding factor A, RbfA"/>
    <property type="match status" value="1"/>
</dbReference>
<dbReference type="PROSITE" id="PS01319">
    <property type="entry name" value="RBFA"/>
    <property type="match status" value="1"/>
</dbReference>
<organism>
    <name type="scientific">Escherichia coli (strain K12 / DH10B)</name>
    <dbReference type="NCBI Taxonomy" id="316385"/>
    <lineage>
        <taxon>Bacteria</taxon>
        <taxon>Pseudomonadati</taxon>
        <taxon>Pseudomonadota</taxon>
        <taxon>Gammaproteobacteria</taxon>
        <taxon>Enterobacterales</taxon>
        <taxon>Enterobacteriaceae</taxon>
        <taxon>Escherichia</taxon>
    </lineage>
</organism>
<accession>B1XGX9</accession>
<gene>
    <name evidence="1" type="primary">rbfA</name>
    <name type="ordered locus">ECDH10B_3341</name>
</gene>
<protein>
    <recommendedName>
        <fullName evidence="1">Ribosome-binding factor A</fullName>
    </recommendedName>
</protein>
<feature type="chain" id="PRO_1000088887" description="Ribosome-binding factor A">
    <location>
        <begin position="1"/>
        <end position="133"/>
    </location>
</feature>
<proteinExistence type="inferred from homology"/>
<name>RBFA_ECODH</name>
<reference key="1">
    <citation type="journal article" date="2008" name="J. Bacteriol.">
        <title>The complete genome sequence of Escherichia coli DH10B: insights into the biology of a laboratory workhorse.</title>
        <authorList>
            <person name="Durfee T."/>
            <person name="Nelson R."/>
            <person name="Baldwin S."/>
            <person name="Plunkett G. III"/>
            <person name="Burland V."/>
            <person name="Mau B."/>
            <person name="Petrosino J.F."/>
            <person name="Qin X."/>
            <person name="Muzny D.M."/>
            <person name="Ayele M."/>
            <person name="Gibbs R.A."/>
            <person name="Csorgo B."/>
            <person name="Posfai G."/>
            <person name="Weinstock G.M."/>
            <person name="Blattner F.R."/>
        </authorList>
    </citation>
    <scope>NUCLEOTIDE SEQUENCE [LARGE SCALE GENOMIC DNA]</scope>
    <source>
        <strain>K12 / DH10B</strain>
    </source>
</reference>
<sequence length="133" mass="15154">MAKEFGRPQRVAQEMQKEIALILQREIKDPRLGMMTTVSGVEMSRDLAYAKVYVTFLNDKDEDAVKAGIKALQEASGFIRSLLGKAMRLRIVPELTFFYDNSLVEGMRMSNLVTSVVKHDEERRVNPDDSKED</sequence>
<comment type="function">
    <text evidence="1">One of several proteins that assist in the late maturation steps of the functional core of the 30S ribosomal subunit. Associates with free 30S ribosomal subunits (but not with 30S subunits that are part of 70S ribosomes or polysomes). Required for efficient processing of 16S rRNA. May interact with the 5'-terminal helix region of 16S rRNA.</text>
</comment>
<comment type="subunit">
    <text evidence="1">Monomer. Binds 30S ribosomal subunits, but not 50S ribosomal subunits or 70S ribosomes.</text>
</comment>
<comment type="subcellular location">
    <subcellularLocation>
        <location evidence="1">Cytoplasm</location>
    </subcellularLocation>
</comment>
<comment type="similarity">
    <text evidence="1">Belongs to the RbfA family.</text>
</comment>
<evidence type="ECO:0000255" key="1">
    <source>
        <dbReference type="HAMAP-Rule" id="MF_00003"/>
    </source>
</evidence>